<protein>
    <recommendedName>
        <fullName evidence="9">Peroxisomal membrane protein 13</fullName>
    </recommendedName>
    <alternativeName>
        <fullName evidence="10">ABSTINENCE BY MUTUAL CONSENT</fullName>
    </alternativeName>
    <alternativeName>
        <fullName evidence="9">Peroxin-13</fullName>
        <shortName evidence="9">AtPEX13</shortName>
    </alternativeName>
    <alternativeName>
        <fullName evidence="9">Peroxisome biogenesis protein 13</fullName>
    </alternativeName>
    <alternativeName>
        <fullName evidence="9">Pex13p</fullName>
    </alternativeName>
    <alternativeName>
        <fullName evidence="9">Protein ABERRANT PEROXISOME MORPHOLOGY 2</fullName>
    </alternativeName>
    <alternativeName>
        <fullName evidence="10">Protein AMC</fullName>
    </alternativeName>
</protein>
<gene>
    <name evidence="9" type="primary">PEX13</name>
    <name evidence="10" type="synonym">AMC</name>
    <name evidence="9" type="synonym">APM2</name>
    <name evidence="15" type="ordered locus">At3g07560</name>
    <name evidence="16" type="ORF">F21O3.27</name>
</gene>
<proteinExistence type="evidence at protein level"/>
<evidence type="ECO:0000250" key="1">
    <source>
        <dbReference type="UniProtKB" id="P80667"/>
    </source>
</evidence>
<evidence type="ECO:0000250" key="2">
    <source>
        <dbReference type="UniProtKB" id="Q92968"/>
    </source>
</evidence>
<evidence type="ECO:0000256" key="3">
    <source>
        <dbReference type="SAM" id="MobiDB-lite"/>
    </source>
</evidence>
<evidence type="ECO:0000269" key="4">
    <source>
    </source>
</evidence>
<evidence type="ECO:0000269" key="5">
    <source>
    </source>
</evidence>
<evidence type="ECO:0000269" key="6">
    <source>
    </source>
</evidence>
<evidence type="ECO:0000269" key="7">
    <source>
    </source>
</evidence>
<evidence type="ECO:0000269" key="8">
    <source>
    </source>
</evidence>
<evidence type="ECO:0000303" key="9">
    <source>
    </source>
</evidence>
<evidence type="ECO:0000303" key="10">
    <source>
    </source>
</evidence>
<evidence type="ECO:0000303" key="11">
    <source>
    </source>
</evidence>
<evidence type="ECO:0000305" key="12"/>
<evidence type="ECO:0000305" key="13">
    <source>
    </source>
</evidence>
<evidence type="ECO:0000305" key="14">
    <source>
    </source>
</evidence>
<evidence type="ECO:0000312" key="15">
    <source>
        <dbReference type="Araport" id="AT3G07560"/>
    </source>
</evidence>
<evidence type="ECO:0000312" key="16">
    <source>
        <dbReference type="EMBL" id="AAF02160.1"/>
    </source>
</evidence>
<reference key="1">
    <citation type="journal article" date="2000" name="Nature">
        <title>Sequence and analysis of chromosome 3 of the plant Arabidopsis thaliana.</title>
        <authorList>
            <person name="Salanoubat M."/>
            <person name="Lemcke K."/>
            <person name="Rieger M."/>
            <person name="Ansorge W."/>
            <person name="Unseld M."/>
            <person name="Fartmann B."/>
            <person name="Valle G."/>
            <person name="Bloecker H."/>
            <person name="Perez-Alonso M."/>
            <person name="Obermaier B."/>
            <person name="Delseny M."/>
            <person name="Boutry M."/>
            <person name="Grivell L.A."/>
            <person name="Mache R."/>
            <person name="Puigdomenech P."/>
            <person name="De Simone V."/>
            <person name="Choisne N."/>
            <person name="Artiguenave F."/>
            <person name="Robert C."/>
            <person name="Brottier P."/>
            <person name="Wincker P."/>
            <person name="Cattolico L."/>
            <person name="Weissenbach J."/>
            <person name="Saurin W."/>
            <person name="Quetier F."/>
            <person name="Schaefer M."/>
            <person name="Mueller-Auer S."/>
            <person name="Gabel C."/>
            <person name="Fuchs M."/>
            <person name="Benes V."/>
            <person name="Wurmbach E."/>
            <person name="Drzonek H."/>
            <person name="Erfle H."/>
            <person name="Jordan N."/>
            <person name="Bangert S."/>
            <person name="Wiedelmann R."/>
            <person name="Kranz H."/>
            <person name="Voss H."/>
            <person name="Holland R."/>
            <person name="Brandt P."/>
            <person name="Nyakatura G."/>
            <person name="Vezzi A."/>
            <person name="D'Angelo M."/>
            <person name="Pallavicini A."/>
            <person name="Toppo S."/>
            <person name="Simionati B."/>
            <person name="Conrad A."/>
            <person name="Hornischer K."/>
            <person name="Kauer G."/>
            <person name="Loehnert T.-H."/>
            <person name="Nordsiek G."/>
            <person name="Reichelt J."/>
            <person name="Scharfe M."/>
            <person name="Schoen O."/>
            <person name="Bargues M."/>
            <person name="Terol J."/>
            <person name="Climent J."/>
            <person name="Navarro P."/>
            <person name="Collado C."/>
            <person name="Perez-Perez A."/>
            <person name="Ottenwaelder B."/>
            <person name="Duchemin D."/>
            <person name="Cooke R."/>
            <person name="Laudie M."/>
            <person name="Berger-Llauro C."/>
            <person name="Purnelle B."/>
            <person name="Masuy D."/>
            <person name="de Haan M."/>
            <person name="Maarse A.C."/>
            <person name="Alcaraz J.-P."/>
            <person name="Cottet A."/>
            <person name="Casacuberta E."/>
            <person name="Monfort A."/>
            <person name="Argiriou A."/>
            <person name="Flores M."/>
            <person name="Liguori R."/>
            <person name="Vitale D."/>
            <person name="Mannhaupt G."/>
            <person name="Haase D."/>
            <person name="Schoof H."/>
            <person name="Rudd S."/>
            <person name="Zaccaria P."/>
            <person name="Mewes H.-W."/>
            <person name="Mayer K.F.X."/>
            <person name="Kaul S."/>
            <person name="Town C.D."/>
            <person name="Koo H.L."/>
            <person name="Tallon L.J."/>
            <person name="Jenkins J."/>
            <person name="Rooney T."/>
            <person name="Rizzo M."/>
            <person name="Walts A."/>
            <person name="Utterback T."/>
            <person name="Fujii C.Y."/>
            <person name="Shea T.P."/>
            <person name="Creasy T.H."/>
            <person name="Haas B."/>
            <person name="Maiti R."/>
            <person name="Wu D."/>
            <person name="Peterson J."/>
            <person name="Van Aken S."/>
            <person name="Pai G."/>
            <person name="Militscher J."/>
            <person name="Sellers P."/>
            <person name="Gill J.E."/>
            <person name="Feldblyum T.V."/>
            <person name="Preuss D."/>
            <person name="Lin X."/>
            <person name="Nierman W.C."/>
            <person name="Salzberg S.L."/>
            <person name="White O."/>
            <person name="Venter J.C."/>
            <person name="Fraser C.M."/>
            <person name="Kaneko T."/>
            <person name="Nakamura Y."/>
            <person name="Sato S."/>
            <person name="Kato T."/>
            <person name="Asamizu E."/>
            <person name="Sasamoto S."/>
            <person name="Kimura T."/>
            <person name="Idesawa K."/>
            <person name="Kawashima K."/>
            <person name="Kishida Y."/>
            <person name="Kiyokawa C."/>
            <person name="Kohara M."/>
            <person name="Matsumoto M."/>
            <person name="Matsuno A."/>
            <person name="Muraki A."/>
            <person name="Nakayama S."/>
            <person name="Nakazaki N."/>
            <person name="Shinpo S."/>
            <person name="Takeuchi C."/>
            <person name="Wada T."/>
            <person name="Watanabe A."/>
            <person name="Yamada M."/>
            <person name="Yasuda M."/>
            <person name="Tabata S."/>
        </authorList>
    </citation>
    <scope>NUCLEOTIDE SEQUENCE [LARGE SCALE GENOMIC DNA]</scope>
    <source>
        <strain>cv. Columbia</strain>
    </source>
</reference>
<reference key="2">
    <citation type="journal article" date="2017" name="Plant J.">
        <title>Araport11: a complete reannotation of the Arabidopsis thaliana reference genome.</title>
        <authorList>
            <person name="Cheng C.Y."/>
            <person name="Krishnakumar V."/>
            <person name="Chan A.P."/>
            <person name="Thibaud-Nissen F."/>
            <person name="Schobel S."/>
            <person name="Town C.D."/>
        </authorList>
    </citation>
    <scope>GENOME REANNOTATION</scope>
    <source>
        <strain>cv. Columbia</strain>
    </source>
</reference>
<reference key="3">
    <citation type="journal article" date="2003" name="Science">
        <title>Empirical analysis of transcriptional activity in the Arabidopsis genome.</title>
        <authorList>
            <person name="Yamada K."/>
            <person name="Lim J."/>
            <person name="Dale J.M."/>
            <person name="Chen H."/>
            <person name="Shinn P."/>
            <person name="Palm C.J."/>
            <person name="Southwick A.M."/>
            <person name="Wu H.C."/>
            <person name="Kim C.J."/>
            <person name="Nguyen M."/>
            <person name="Pham P.K."/>
            <person name="Cheuk R.F."/>
            <person name="Karlin-Newmann G."/>
            <person name="Liu S.X."/>
            <person name="Lam B."/>
            <person name="Sakano H."/>
            <person name="Wu T."/>
            <person name="Yu G."/>
            <person name="Miranda M."/>
            <person name="Quach H.L."/>
            <person name="Tripp M."/>
            <person name="Chang C.H."/>
            <person name="Lee J.M."/>
            <person name="Toriumi M.J."/>
            <person name="Chan M.M."/>
            <person name="Tang C.C."/>
            <person name="Onodera C.S."/>
            <person name="Deng J.M."/>
            <person name="Akiyama K."/>
            <person name="Ansari Y."/>
            <person name="Arakawa T."/>
            <person name="Banh J."/>
            <person name="Banno F."/>
            <person name="Bowser L."/>
            <person name="Brooks S.Y."/>
            <person name="Carninci P."/>
            <person name="Chao Q."/>
            <person name="Choy N."/>
            <person name="Enju A."/>
            <person name="Goldsmith A.D."/>
            <person name="Gurjal M."/>
            <person name="Hansen N.F."/>
            <person name="Hayashizaki Y."/>
            <person name="Johnson-Hopson C."/>
            <person name="Hsuan V.W."/>
            <person name="Iida K."/>
            <person name="Karnes M."/>
            <person name="Khan S."/>
            <person name="Koesema E."/>
            <person name="Ishida J."/>
            <person name="Jiang P.X."/>
            <person name="Jones T."/>
            <person name="Kawai J."/>
            <person name="Kamiya A."/>
            <person name="Meyers C."/>
            <person name="Nakajima M."/>
            <person name="Narusaka M."/>
            <person name="Seki M."/>
            <person name="Sakurai T."/>
            <person name="Satou M."/>
            <person name="Tamse R."/>
            <person name="Vaysberg M."/>
            <person name="Wallender E.K."/>
            <person name="Wong C."/>
            <person name="Yamamura Y."/>
            <person name="Yuan S."/>
            <person name="Shinozaki K."/>
            <person name="Davis R.W."/>
            <person name="Theologis A."/>
            <person name="Ecker J.R."/>
        </authorList>
    </citation>
    <scope>NUCLEOTIDE SEQUENCE [LARGE SCALE MRNA] (ISOFORM 1)</scope>
    <source>
        <strain>cv. Columbia</strain>
    </source>
</reference>
<reference key="4">
    <citation type="journal article" date="2009" name="DNA Res.">
        <title>Analysis of multiple occurrences of alternative splicing events in Arabidopsis thaliana using novel sequenced full-length cDNAs.</title>
        <authorList>
            <person name="Iida K."/>
            <person name="Fukami-Kobayashi K."/>
            <person name="Toyoda A."/>
            <person name="Sakaki Y."/>
            <person name="Kobayashi M."/>
            <person name="Seki M."/>
            <person name="Shinozaki K."/>
        </authorList>
    </citation>
    <scope>NUCLEOTIDE SEQUENCE [LARGE SCALE MRNA] (ISOFORM 2)</scope>
    <source>
        <strain>cv. Columbia</strain>
    </source>
</reference>
<reference key="5">
    <citation type="journal article" date="2006" name="Plant J.">
        <title>The Arabidopsis pex12 and pex13 mutants are defective in both PTS1- and PTS2-dependent protein transport to peroxisomes.</title>
        <authorList>
            <person name="Mano S."/>
            <person name="Nakamori C."/>
            <person name="Nito K."/>
            <person name="Kondo M."/>
            <person name="Nishimura M."/>
        </authorList>
    </citation>
    <scope>FUNCTION</scope>
    <scope>SUBCELLULAR LOCATION</scope>
    <scope>MUTAGENESIS OF 263-GLN--ASN-304</scope>
    <scope>INTERACTION WITH PEX5; PEX7 AND PEX14</scope>
</reference>
<reference key="6">
    <citation type="journal article" date="2007" name="Plant Cell Physiol.">
        <title>Functional classification of Arabidopsis peroxisome biogenesis factors proposed from analyses of knockdown mutants.</title>
        <authorList>
            <person name="Nito K."/>
            <person name="Kamigaki A."/>
            <person name="Kondo M."/>
            <person name="Hayashi M."/>
            <person name="Nishimura M."/>
        </authorList>
    </citation>
    <scope>FUNCTION</scope>
</reference>
<reference key="7">
    <citation type="journal article" date="2008" name="Curr. Biol.">
        <title>The peroxin loss-of-function mutation abstinence by mutual consent disrupts male-female gametophyte recognition.</title>
        <authorList>
            <person name="Boisson-Dernier A."/>
            <person name="Frietsch S."/>
            <person name="Kim T.H."/>
            <person name="Dizon M.B."/>
            <person name="Schroeder J.I."/>
        </authorList>
    </citation>
    <scope>FUNCTION</scope>
    <scope>DISRUPTION PHENOTYPE</scope>
    <scope>TISSUE SPECIFICITY</scope>
    <scope>SUBCELLULAR LOCATION</scope>
</reference>
<reference key="8">
    <citation type="journal article" date="2009" name="Plant J.">
        <title>Molecular components required for the targeting of PEX7 to peroxisomes in Arabidopsis thaliana.</title>
        <authorList>
            <person name="Singh T."/>
            <person name="Hayashi M."/>
            <person name="Mano S."/>
            <person name="Arai Y."/>
            <person name="Goto S."/>
            <person name="Nishimura M."/>
        </authorList>
    </citation>
    <scope>FUNCTION</scope>
</reference>
<reference key="9">
    <citation type="journal article" date="2014" name="Plant Cell">
        <title>Arabidopsis DAYU/ABERRANT PEROXISOME MORPHOLOGY9 is a key regulator of peroxisome biogenesis and plays critical roles during pollen maturation and germination in planta.</title>
        <authorList>
            <person name="Li X.R."/>
            <person name="Li H.J."/>
            <person name="Yuan L."/>
            <person name="Liu M."/>
            <person name="Shi D.Q."/>
            <person name="Liu J."/>
            <person name="Yang W.C."/>
        </authorList>
    </citation>
    <scope>INTERACTION WITH APEM9</scope>
</reference>
<name>PEX13_ARATH</name>
<keyword id="KW-0025">Alternative splicing</keyword>
<keyword id="KW-0472">Membrane</keyword>
<keyword id="KW-0576">Peroxisome</keyword>
<keyword id="KW-0962">Peroxisome biogenesis</keyword>
<keyword id="KW-0653">Protein transport</keyword>
<keyword id="KW-1185">Reference proteome</keyword>
<keyword id="KW-0811">Translocation</keyword>
<keyword id="KW-0813">Transport</keyword>
<organism>
    <name type="scientific">Arabidopsis thaliana</name>
    <name type="common">Mouse-ear cress</name>
    <dbReference type="NCBI Taxonomy" id="3702"/>
    <lineage>
        <taxon>Eukaryota</taxon>
        <taxon>Viridiplantae</taxon>
        <taxon>Streptophyta</taxon>
        <taxon>Embryophyta</taxon>
        <taxon>Tracheophyta</taxon>
        <taxon>Spermatophyta</taxon>
        <taxon>Magnoliopsida</taxon>
        <taxon>eudicotyledons</taxon>
        <taxon>Gunneridae</taxon>
        <taxon>Pentapetalae</taxon>
        <taxon>rosids</taxon>
        <taxon>malvids</taxon>
        <taxon>Brassicales</taxon>
        <taxon>Brassicaceae</taxon>
        <taxon>Camelineae</taxon>
        <taxon>Arabidopsis</taxon>
    </lineage>
</organism>
<sequence>MASQPAGGSPPKPWEKEGNTSGPNPFRPPSNTSTAGSVEASGTANPGEVVPPPVNRPNTAANMNSLSRPVPARPWEQQNYGSTMGGGYGSNLGMTSGYGSGTYGSALGGYGSSYGGGMYGGSSMYRGGYGGGGLYGSSGMYGGGAMGGYGGTMGGYGMGMGTGMGMGMGMGMGGPYGSQDPNDPFNQPPSPPGFWISFLRVMQGAVNFFGRVAMLIDQNTQAFHMFMSALLQLFDRGGMLYGELARFVLRMLGVRTRPRKMQQPPQGPNGLPLPHQPHGNQNYLEGPKTAAPGGGGGWDNVWGN</sequence>
<comment type="function">
    <text evidence="1 2 4 5 6 7">Component of the PEX13-PEX14 docking complex, a translocon channel that specifically mediates the import of peroxisomal cargo proteins bound to PEX5 receptor (PubMed:16813573, PubMed:17478547, PubMed:19594707). The PEX13-PEX14 docking complex forms a large import pore which can be opened to a diameter of about 9 nm (By similarity). Mechanistically, PEX5 receptor along with cargo proteins associates with the PEX14 subunit of the PEX13-PEX14 docking complex in the cytosol, leading to the insertion of the receptor into the organelle membrane with the concomitant translocation of the cargo into the peroxisome matrix (By similarity). Essential for pollen-tube discharge that take place only in the presence of functional peroxisomes in either the male or the female gametophyte (PubMed:18160292).</text>
</comment>
<comment type="subunit">
    <text evidence="2 4 8">Interacts with PEX14; forming the PEX13-PEX14 docking complex (By similarity). Interacts (via N-terminus) with PEX7, but not with PEX5 (PubMed:16813573). Interacts with APEM9 (via N-terminus) (PubMed:24510720).</text>
</comment>
<comment type="subcellular location">
    <subcellularLocation>
        <location evidence="13 14">Peroxisome membrane</location>
        <topology evidence="13">Peripheral membrane protein</topology>
    </subcellularLocation>
</comment>
<comment type="alternative products">
    <event type="alternative splicing"/>
    <isoform>
        <id>Q9SRR0-1</id>
        <name>1</name>
        <sequence type="displayed"/>
    </isoform>
    <isoform>
        <id>Q9SRR0-2</id>
        <name>2</name>
        <sequence type="described" ref="VSP_040377"/>
    </isoform>
</comment>
<comment type="tissue specificity">
    <text evidence="6">Highly expressed in pollen. Detected in shoots, roots, stems, leaves, inflorescences and emasculated postils. Strongly expressed in both male and female gametophytes during fertilization.</text>
</comment>
<comment type="disruption phenotype">
    <text evidence="6">Lethal, when homozygous.</text>
</comment>
<comment type="similarity">
    <text evidence="12">Belongs to the peroxin-13 family.</text>
</comment>
<feature type="chain" id="PRO_0000403359" description="Peroxisomal membrane protein 13">
    <location>
        <begin position="1"/>
        <end position="304"/>
    </location>
</feature>
<feature type="region of interest" description="Disordered" evidence="3">
    <location>
        <begin position="1"/>
        <end position="78"/>
    </location>
</feature>
<feature type="region of interest" description="Disordered" evidence="3">
    <location>
        <begin position="258"/>
        <end position="304"/>
    </location>
</feature>
<feature type="compositionally biased region" description="Polar residues" evidence="3">
    <location>
        <begin position="19"/>
        <end position="44"/>
    </location>
</feature>
<feature type="compositionally biased region" description="Polar residues" evidence="3">
    <location>
        <begin position="56"/>
        <end position="67"/>
    </location>
</feature>
<feature type="compositionally biased region" description="Low complexity" evidence="3">
    <location>
        <begin position="262"/>
        <end position="279"/>
    </location>
</feature>
<feature type="splice variant" id="VSP_040377" description="In isoform 2." evidence="11">
    <location>
        <begin position="130"/>
        <end position="293"/>
    </location>
</feature>
<feature type="mutagenesis site" description="In apm2; reduced protein transport to peroxisome and repressed plant growth." evidence="4">
    <location>
        <begin position="263"/>
        <end position="304"/>
    </location>
</feature>
<dbReference type="EMBL" id="AC009853">
    <property type="protein sequence ID" value="AAF02160.1"/>
    <property type="molecule type" value="Genomic_DNA"/>
</dbReference>
<dbReference type="EMBL" id="CP002686">
    <property type="protein sequence ID" value="AEE74561.1"/>
    <property type="molecule type" value="Genomic_DNA"/>
</dbReference>
<dbReference type="EMBL" id="AY075689">
    <property type="protein sequence ID" value="AAL77696.1"/>
    <property type="molecule type" value="mRNA"/>
</dbReference>
<dbReference type="EMBL" id="AY093745">
    <property type="protein sequence ID" value="AAM10369.1"/>
    <property type="molecule type" value="mRNA"/>
</dbReference>
<dbReference type="EMBL" id="AK318837">
    <property type="protein sequence ID" value="BAH56952.1"/>
    <property type="molecule type" value="mRNA"/>
</dbReference>
<dbReference type="RefSeq" id="NP_187412.1">
    <molecule id="Q9SRR0-1"/>
    <property type="nucleotide sequence ID" value="NM_111634.6"/>
</dbReference>
<dbReference type="BioGRID" id="5280">
    <property type="interactions" value="2"/>
</dbReference>
<dbReference type="FunCoup" id="Q9SRR0">
    <property type="interactions" value="844"/>
</dbReference>
<dbReference type="IntAct" id="Q9SRR0">
    <property type="interactions" value="1"/>
</dbReference>
<dbReference type="STRING" id="3702.Q9SRR0"/>
<dbReference type="TCDB" id="3.A.20.1.2">
    <property type="family name" value="the peroxisomal protein importer (ppi) family"/>
</dbReference>
<dbReference type="iPTMnet" id="Q9SRR0"/>
<dbReference type="PaxDb" id="3702-AT3G07560.1"/>
<dbReference type="EnsemblPlants" id="AT3G07560.1">
    <molecule id="Q9SRR0-1"/>
    <property type="protein sequence ID" value="AT3G07560.1"/>
    <property type="gene ID" value="AT3G07560"/>
</dbReference>
<dbReference type="GeneID" id="819945"/>
<dbReference type="Gramene" id="AT3G07560.1">
    <molecule id="Q9SRR0-1"/>
    <property type="protein sequence ID" value="AT3G07560.1"/>
    <property type="gene ID" value="AT3G07560"/>
</dbReference>
<dbReference type="KEGG" id="ath:AT3G07560"/>
<dbReference type="Araport" id="AT3G07560"/>
<dbReference type="TAIR" id="AT3G07560">
    <property type="gene designation" value="PEX13"/>
</dbReference>
<dbReference type="eggNOG" id="ENOG502QSVT">
    <property type="taxonomic scope" value="Eukaryota"/>
</dbReference>
<dbReference type="HOGENOM" id="CLU_056096_0_0_1"/>
<dbReference type="InParanoid" id="Q9SRR0"/>
<dbReference type="OMA" id="GFWISFI"/>
<dbReference type="OrthoDB" id="514567at2759"/>
<dbReference type="PhylomeDB" id="Q9SRR0"/>
<dbReference type="PRO" id="PR:Q9SRR0"/>
<dbReference type="Proteomes" id="UP000006548">
    <property type="component" value="Chromosome 3"/>
</dbReference>
<dbReference type="ExpressionAtlas" id="Q9SRR0">
    <property type="expression patterns" value="baseline and differential"/>
</dbReference>
<dbReference type="GO" id="GO:0005778">
    <property type="term" value="C:peroxisomal membrane"/>
    <property type="evidence" value="ECO:0000314"/>
    <property type="project" value="TAIR"/>
</dbReference>
<dbReference type="GO" id="GO:0006635">
    <property type="term" value="P:fatty acid beta-oxidation"/>
    <property type="evidence" value="ECO:0000315"/>
    <property type="project" value="TAIR"/>
</dbReference>
<dbReference type="GO" id="GO:0016558">
    <property type="term" value="P:protein import into peroxisome matrix"/>
    <property type="evidence" value="ECO:0000314"/>
    <property type="project" value="TAIR"/>
</dbReference>
<dbReference type="GO" id="GO:0016560">
    <property type="term" value="P:protein import into peroxisome matrix, docking"/>
    <property type="evidence" value="ECO:0007669"/>
    <property type="project" value="InterPro"/>
</dbReference>
<dbReference type="InterPro" id="IPR035463">
    <property type="entry name" value="Pex13"/>
</dbReference>
<dbReference type="PANTHER" id="PTHR19332">
    <property type="entry name" value="PEROXISOMAL MEMBRANE PROTEIN PEX13"/>
    <property type="match status" value="1"/>
</dbReference>
<dbReference type="PANTHER" id="PTHR19332:SF1">
    <property type="entry name" value="PEROXISOMAL MEMBRANE PROTEIN PEX13"/>
    <property type="match status" value="1"/>
</dbReference>
<accession>Q9SRR0</accession>
<accession>C0Z2M3</accession>